<accession>Q0ABI1</accession>
<evidence type="ECO:0000255" key="1">
    <source>
        <dbReference type="HAMAP-Rule" id="MF_01322"/>
    </source>
</evidence>
<evidence type="ECO:0000256" key="2">
    <source>
        <dbReference type="SAM" id="MobiDB-lite"/>
    </source>
</evidence>
<protein>
    <recommendedName>
        <fullName evidence="1">DNA-directed RNA polymerase subunit beta'</fullName>
        <shortName evidence="1">RNAP subunit beta'</shortName>
        <ecNumber evidence="1">2.7.7.6</ecNumber>
    </recommendedName>
    <alternativeName>
        <fullName evidence="1">RNA polymerase subunit beta'</fullName>
    </alternativeName>
    <alternativeName>
        <fullName evidence="1">Transcriptase subunit beta'</fullName>
    </alternativeName>
</protein>
<sequence length="1426" mass="157013">MKDLLNLFKQPGAQLEDFDAIRIGLASPEMIRSWSYGEVKKPETINYRTFKPERDGLFCAKIFGPVKDYECLCGKYKRLKHRGVVCEKCGVEVTIAKVRRERMGHIDLASPVAHIWFLKSLPSRIGLLLDMTLRDIERILYFEAFVVIEPGMTPLERGQLLSDEAYLDAIEQHGDEFEAKMGAEAVLDLLKSLDMTGEARTLREEIEGTNSESKIKRLSKRLKLIEAFLESGNKPEWMIMDVLPVLPPDLRPLVPLDGGRFATSDLNDLYRRVINRNNRLKRLLELSAPDIIVRNEKRMLQESVDALLDNGRRGRAITGTNKRPLKSLADMIKGKQGRFRQNLLGKRVDYSGRSVIVVGPTLRLHQCGLPKRMALELFKPFIFSKLQLRGLATTIKAAKKMVERETGEVWDILSEVIREHPVMLNRAPTLHRLGIQAFEPVLIEGKAIQLHPLVCTAFNADFDGDQMAVHVPLSLEAQLEARALMMSTNNILSPASGEPIIVPSQDVVLGLYYMTRERLDAKGRGMVFTDVQEVHRAHQNGVLDLGARVQVRIREAVFDENGGMNERVHRVETVAGRALLYEIVPDGLPFELVDRDMTKKAISGLVNACYRRVGLKGTVVFADQLMYMGFSMSTGAGVSIGVNDMEVPAEKEKILADAEEEVKDIEEQYASGLVTNGERYNKVVDIWSHTNEAVAKAMMEKMGKDLVEVDGEQKEQKSFNSIFMMADSGARGSAAQIRQLAGMRGLMAKPDGSIIETPITANFREGLNVLQYFISTHGARKGLADTALKTANSGYLTRRLVDVSQDLVVTEEDCGTTEGLHMTPIIEGGDVVETLADRVLGRVVAEDVYKPGTDEVVAAAGTLLDEEWVEHLEQQGVDEIRVRSPITCQTRHGVCAQCYGRDLARGHGVNVGEAVGVIAAQSIGEPGTQLTMRTFHIGGAASRAASINNVQVRNSGSVRLHNVKVVKHHSGNYVAVSRSGEVTVMDDHGRERERYKIPYGAVLSVADGDAVESGQIVANWDPHTHPIITEVEGRVRFYDFVEGVTVAREVDEVTGLSSLVVTDPKSRGNGEHRRMVTDASGKQVEERVAYKDLRPMIKLVDEDGNDLNIAGTDIPAHYFLPAEAIISLEDGAEVRVGDALARIPQESSKTRDITGGLPRVADLFEARKPKEPAILAEVSGTVGFGKDTKGKQRLVITKADGETYEELIPKWRTVTVFEGEHVEKGEVIADGEPNPHDILRLLGVTALAAYVVKEIQDVYRLQGVKINDKHIEVICRQMLRKVGVKDPGESHFLRGEQVDRARVLEANDALEAADKTPATFEPLLLGITKASLATESFISAASFQETTRVLTEAATRGARDDLRGLKENVIVGRLIPAGTGFAYHEERRRAQADPIAAAESAIGLGGGEQPATSETGAGGSDPSEEG</sequence>
<name>RPOC_ALKEH</name>
<reference key="1">
    <citation type="submission" date="2006-08" db="EMBL/GenBank/DDBJ databases">
        <title>Complete sequence of Alkalilimnicola ehrilichei MLHE-1.</title>
        <authorList>
            <person name="Copeland A."/>
            <person name="Lucas S."/>
            <person name="Lapidus A."/>
            <person name="Barry K."/>
            <person name="Detter J.C."/>
            <person name="Glavina del Rio T."/>
            <person name="Hammon N."/>
            <person name="Israni S."/>
            <person name="Dalin E."/>
            <person name="Tice H."/>
            <person name="Pitluck S."/>
            <person name="Sims D."/>
            <person name="Brettin T."/>
            <person name="Bruce D."/>
            <person name="Han C."/>
            <person name="Tapia R."/>
            <person name="Gilna P."/>
            <person name="Schmutz J."/>
            <person name="Larimer F."/>
            <person name="Land M."/>
            <person name="Hauser L."/>
            <person name="Kyrpides N."/>
            <person name="Mikhailova N."/>
            <person name="Oremland R.S."/>
            <person name="Hoeft S.E."/>
            <person name="Switzer-Blum J."/>
            <person name="Kulp T."/>
            <person name="King G."/>
            <person name="Tabita R."/>
            <person name="Witte B."/>
            <person name="Santini J.M."/>
            <person name="Basu P."/>
            <person name="Hollibaugh J.T."/>
            <person name="Xie G."/>
            <person name="Stolz J.F."/>
            <person name="Richardson P."/>
        </authorList>
    </citation>
    <scope>NUCLEOTIDE SEQUENCE [LARGE SCALE GENOMIC DNA]</scope>
    <source>
        <strain>ATCC BAA-1101 / DSM 17681 / MLHE-1</strain>
    </source>
</reference>
<organism>
    <name type="scientific">Alkalilimnicola ehrlichii (strain ATCC BAA-1101 / DSM 17681 / MLHE-1)</name>
    <dbReference type="NCBI Taxonomy" id="187272"/>
    <lineage>
        <taxon>Bacteria</taxon>
        <taxon>Pseudomonadati</taxon>
        <taxon>Pseudomonadota</taxon>
        <taxon>Gammaproteobacteria</taxon>
        <taxon>Chromatiales</taxon>
        <taxon>Ectothiorhodospiraceae</taxon>
        <taxon>Alkalilimnicola</taxon>
    </lineage>
</organism>
<keyword id="KW-0240">DNA-directed RNA polymerase</keyword>
<keyword id="KW-0460">Magnesium</keyword>
<keyword id="KW-0479">Metal-binding</keyword>
<keyword id="KW-0548">Nucleotidyltransferase</keyword>
<keyword id="KW-1185">Reference proteome</keyword>
<keyword id="KW-0804">Transcription</keyword>
<keyword id="KW-0808">Transferase</keyword>
<keyword id="KW-0862">Zinc</keyword>
<proteinExistence type="inferred from homology"/>
<gene>
    <name evidence="1" type="primary">rpoC</name>
    <name type="ordered locus">Mlg_0452</name>
</gene>
<feature type="chain" id="PRO_0000353283" description="DNA-directed RNA polymerase subunit beta'">
    <location>
        <begin position="1"/>
        <end position="1426"/>
    </location>
</feature>
<feature type="region of interest" description="Disordered" evidence="2">
    <location>
        <begin position="1392"/>
        <end position="1426"/>
    </location>
</feature>
<feature type="binding site" evidence="1">
    <location>
        <position position="71"/>
    </location>
    <ligand>
        <name>Zn(2+)</name>
        <dbReference type="ChEBI" id="CHEBI:29105"/>
        <label>1</label>
    </ligand>
</feature>
<feature type="binding site" evidence="1">
    <location>
        <position position="73"/>
    </location>
    <ligand>
        <name>Zn(2+)</name>
        <dbReference type="ChEBI" id="CHEBI:29105"/>
        <label>1</label>
    </ligand>
</feature>
<feature type="binding site" evidence="1">
    <location>
        <position position="86"/>
    </location>
    <ligand>
        <name>Zn(2+)</name>
        <dbReference type="ChEBI" id="CHEBI:29105"/>
        <label>1</label>
    </ligand>
</feature>
<feature type="binding site" evidence="1">
    <location>
        <position position="89"/>
    </location>
    <ligand>
        <name>Zn(2+)</name>
        <dbReference type="ChEBI" id="CHEBI:29105"/>
        <label>1</label>
    </ligand>
</feature>
<feature type="binding site" evidence="1">
    <location>
        <position position="461"/>
    </location>
    <ligand>
        <name>Mg(2+)</name>
        <dbReference type="ChEBI" id="CHEBI:18420"/>
    </ligand>
</feature>
<feature type="binding site" evidence="1">
    <location>
        <position position="463"/>
    </location>
    <ligand>
        <name>Mg(2+)</name>
        <dbReference type="ChEBI" id="CHEBI:18420"/>
    </ligand>
</feature>
<feature type="binding site" evidence="1">
    <location>
        <position position="465"/>
    </location>
    <ligand>
        <name>Mg(2+)</name>
        <dbReference type="ChEBI" id="CHEBI:18420"/>
    </ligand>
</feature>
<feature type="binding site" evidence="1">
    <location>
        <position position="814"/>
    </location>
    <ligand>
        <name>Zn(2+)</name>
        <dbReference type="ChEBI" id="CHEBI:29105"/>
        <label>2</label>
    </ligand>
</feature>
<feature type="binding site" evidence="1">
    <location>
        <position position="888"/>
    </location>
    <ligand>
        <name>Zn(2+)</name>
        <dbReference type="ChEBI" id="CHEBI:29105"/>
        <label>2</label>
    </ligand>
</feature>
<feature type="binding site" evidence="1">
    <location>
        <position position="895"/>
    </location>
    <ligand>
        <name>Zn(2+)</name>
        <dbReference type="ChEBI" id="CHEBI:29105"/>
        <label>2</label>
    </ligand>
</feature>
<feature type="binding site" evidence="1">
    <location>
        <position position="898"/>
    </location>
    <ligand>
        <name>Zn(2+)</name>
        <dbReference type="ChEBI" id="CHEBI:29105"/>
        <label>2</label>
    </ligand>
</feature>
<comment type="function">
    <text evidence="1">DNA-dependent RNA polymerase catalyzes the transcription of DNA into RNA using the four ribonucleoside triphosphates as substrates.</text>
</comment>
<comment type="catalytic activity">
    <reaction evidence="1">
        <text>RNA(n) + a ribonucleoside 5'-triphosphate = RNA(n+1) + diphosphate</text>
        <dbReference type="Rhea" id="RHEA:21248"/>
        <dbReference type="Rhea" id="RHEA-COMP:14527"/>
        <dbReference type="Rhea" id="RHEA-COMP:17342"/>
        <dbReference type="ChEBI" id="CHEBI:33019"/>
        <dbReference type="ChEBI" id="CHEBI:61557"/>
        <dbReference type="ChEBI" id="CHEBI:140395"/>
        <dbReference type="EC" id="2.7.7.6"/>
    </reaction>
</comment>
<comment type="cofactor">
    <cofactor evidence="1">
        <name>Mg(2+)</name>
        <dbReference type="ChEBI" id="CHEBI:18420"/>
    </cofactor>
    <text evidence="1">Binds 1 Mg(2+) ion per subunit.</text>
</comment>
<comment type="cofactor">
    <cofactor evidence="1">
        <name>Zn(2+)</name>
        <dbReference type="ChEBI" id="CHEBI:29105"/>
    </cofactor>
    <text evidence="1">Binds 2 Zn(2+) ions per subunit.</text>
</comment>
<comment type="subunit">
    <text evidence="1">The RNAP catalytic core consists of 2 alpha, 1 beta, 1 beta' and 1 omega subunit. When a sigma factor is associated with the core the holoenzyme is formed, which can initiate transcription.</text>
</comment>
<comment type="similarity">
    <text evidence="1">Belongs to the RNA polymerase beta' chain family.</text>
</comment>
<dbReference type="EC" id="2.7.7.6" evidence="1"/>
<dbReference type="EMBL" id="CP000453">
    <property type="protein sequence ID" value="ABI55806.1"/>
    <property type="molecule type" value="Genomic_DNA"/>
</dbReference>
<dbReference type="RefSeq" id="WP_011628202.1">
    <property type="nucleotide sequence ID" value="NC_008340.1"/>
</dbReference>
<dbReference type="SMR" id="Q0ABI1"/>
<dbReference type="KEGG" id="aeh:Mlg_0452"/>
<dbReference type="eggNOG" id="COG0086">
    <property type="taxonomic scope" value="Bacteria"/>
</dbReference>
<dbReference type="HOGENOM" id="CLU_000524_3_1_6"/>
<dbReference type="OrthoDB" id="9815296at2"/>
<dbReference type="Proteomes" id="UP000001962">
    <property type="component" value="Chromosome"/>
</dbReference>
<dbReference type="GO" id="GO:0000428">
    <property type="term" value="C:DNA-directed RNA polymerase complex"/>
    <property type="evidence" value="ECO:0007669"/>
    <property type="project" value="UniProtKB-KW"/>
</dbReference>
<dbReference type="GO" id="GO:0003677">
    <property type="term" value="F:DNA binding"/>
    <property type="evidence" value="ECO:0007669"/>
    <property type="project" value="UniProtKB-UniRule"/>
</dbReference>
<dbReference type="GO" id="GO:0003899">
    <property type="term" value="F:DNA-directed RNA polymerase activity"/>
    <property type="evidence" value="ECO:0007669"/>
    <property type="project" value="UniProtKB-UniRule"/>
</dbReference>
<dbReference type="GO" id="GO:0000287">
    <property type="term" value="F:magnesium ion binding"/>
    <property type="evidence" value="ECO:0007669"/>
    <property type="project" value="UniProtKB-UniRule"/>
</dbReference>
<dbReference type="GO" id="GO:0008270">
    <property type="term" value="F:zinc ion binding"/>
    <property type="evidence" value="ECO:0007669"/>
    <property type="project" value="UniProtKB-UniRule"/>
</dbReference>
<dbReference type="GO" id="GO:0006351">
    <property type="term" value="P:DNA-templated transcription"/>
    <property type="evidence" value="ECO:0007669"/>
    <property type="project" value="UniProtKB-UniRule"/>
</dbReference>
<dbReference type="CDD" id="cd02655">
    <property type="entry name" value="RNAP_beta'_C"/>
    <property type="match status" value="1"/>
</dbReference>
<dbReference type="CDD" id="cd01609">
    <property type="entry name" value="RNAP_beta'_N"/>
    <property type="match status" value="1"/>
</dbReference>
<dbReference type="FunFam" id="1.10.132.30:FF:000003">
    <property type="entry name" value="DNA-directed RNA polymerase subunit beta"/>
    <property type="match status" value="1"/>
</dbReference>
<dbReference type="FunFam" id="1.10.150.390:FF:000002">
    <property type="entry name" value="DNA-directed RNA polymerase subunit beta"/>
    <property type="match status" value="1"/>
</dbReference>
<dbReference type="FunFam" id="4.10.860.120:FF:000001">
    <property type="entry name" value="DNA-directed RNA polymerase subunit beta"/>
    <property type="match status" value="1"/>
</dbReference>
<dbReference type="Gene3D" id="1.10.132.30">
    <property type="match status" value="1"/>
</dbReference>
<dbReference type="Gene3D" id="1.10.150.390">
    <property type="match status" value="1"/>
</dbReference>
<dbReference type="Gene3D" id="1.10.1790.20">
    <property type="match status" value="1"/>
</dbReference>
<dbReference type="Gene3D" id="1.10.40.90">
    <property type="match status" value="1"/>
</dbReference>
<dbReference type="Gene3D" id="2.40.40.20">
    <property type="match status" value="1"/>
</dbReference>
<dbReference type="Gene3D" id="2.40.50.100">
    <property type="match status" value="3"/>
</dbReference>
<dbReference type="Gene3D" id="4.10.860.120">
    <property type="entry name" value="RNA polymerase II, clamp domain"/>
    <property type="match status" value="1"/>
</dbReference>
<dbReference type="Gene3D" id="1.10.274.100">
    <property type="entry name" value="RNA polymerase Rpb1, domain 3"/>
    <property type="match status" value="2"/>
</dbReference>
<dbReference type="HAMAP" id="MF_01322">
    <property type="entry name" value="RNApol_bact_RpoC"/>
    <property type="match status" value="1"/>
</dbReference>
<dbReference type="InterPro" id="IPR045867">
    <property type="entry name" value="DNA-dir_RpoC_beta_prime"/>
</dbReference>
<dbReference type="InterPro" id="IPR012754">
    <property type="entry name" value="DNA-dir_RpoC_beta_prime_bact"/>
</dbReference>
<dbReference type="InterPro" id="IPR000722">
    <property type="entry name" value="RNA_pol_asu"/>
</dbReference>
<dbReference type="InterPro" id="IPR006592">
    <property type="entry name" value="RNA_pol_N"/>
</dbReference>
<dbReference type="InterPro" id="IPR007080">
    <property type="entry name" value="RNA_pol_Rpb1_1"/>
</dbReference>
<dbReference type="InterPro" id="IPR007066">
    <property type="entry name" value="RNA_pol_Rpb1_3"/>
</dbReference>
<dbReference type="InterPro" id="IPR042102">
    <property type="entry name" value="RNA_pol_Rpb1_3_sf"/>
</dbReference>
<dbReference type="InterPro" id="IPR007083">
    <property type="entry name" value="RNA_pol_Rpb1_4"/>
</dbReference>
<dbReference type="InterPro" id="IPR007081">
    <property type="entry name" value="RNA_pol_Rpb1_5"/>
</dbReference>
<dbReference type="InterPro" id="IPR044893">
    <property type="entry name" value="RNA_pol_Rpb1_clamp_domain"/>
</dbReference>
<dbReference type="InterPro" id="IPR038120">
    <property type="entry name" value="Rpb1_funnel_sf"/>
</dbReference>
<dbReference type="NCBIfam" id="TIGR02386">
    <property type="entry name" value="rpoC_TIGR"/>
    <property type="match status" value="1"/>
</dbReference>
<dbReference type="PANTHER" id="PTHR19376">
    <property type="entry name" value="DNA-DIRECTED RNA POLYMERASE"/>
    <property type="match status" value="1"/>
</dbReference>
<dbReference type="PANTHER" id="PTHR19376:SF54">
    <property type="entry name" value="DNA-DIRECTED RNA POLYMERASE SUBUNIT BETA"/>
    <property type="match status" value="1"/>
</dbReference>
<dbReference type="Pfam" id="PF04997">
    <property type="entry name" value="RNA_pol_Rpb1_1"/>
    <property type="match status" value="1"/>
</dbReference>
<dbReference type="Pfam" id="PF00623">
    <property type="entry name" value="RNA_pol_Rpb1_2"/>
    <property type="match status" value="2"/>
</dbReference>
<dbReference type="Pfam" id="PF04983">
    <property type="entry name" value="RNA_pol_Rpb1_3"/>
    <property type="match status" value="1"/>
</dbReference>
<dbReference type="Pfam" id="PF05000">
    <property type="entry name" value="RNA_pol_Rpb1_4"/>
    <property type="match status" value="1"/>
</dbReference>
<dbReference type="Pfam" id="PF04998">
    <property type="entry name" value="RNA_pol_Rpb1_5"/>
    <property type="match status" value="1"/>
</dbReference>
<dbReference type="SMART" id="SM00663">
    <property type="entry name" value="RPOLA_N"/>
    <property type="match status" value="1"/>
</dbReference>
<dbReference type="SUPFAM" id="SSF64484">
    <property type="entry name" value="beta and beta-prime subunits of DNA dependent RNA-polymerase"/>
    <property type="match status" value="1"/>
</dbReference>